<organism>
    <name type="scientific">Streptococcus pyogenes serotype M3 (strain ATCC BAA-595 / MGAS315)</name>
    <dbReference type="NCBI Taxonomy" id="198466"/>
    <lineage>
        <taxon>Bacteria</taxon>
        <taxon>Bacillati</taxon>
        <taxon>Bacillota</taxon>
        <taxon>Bacilli</taxon>
        <taxon>Lactobacillales</taxon>
        <taxon>Streptococcaceae</taxon>
        <taxon>Streptococcus</taxon>
    </lineage>
</organism>
<sequence>MAQAQYAGTGRRKNAVARVRLVPGTGKITVNKKDVEEYIPHADLRLIINQPFAVTSTEGSYDVFVNVVGGGYGGQSGAIRHGIARALLQVDPDFRDSLKRAGLLTRDARMVERKKPGLKKARKASQFSKR</sequence>
<protein>
    <recommendedName>
        <fullName evidence="1">Small ribosomal subunit protein uS9</fullName>
    </recommendedName>
    <alternativeName>
        <fullName evidence="2">30S ribosomal protein S9</fullName>
    </alternativeName>
</protein>
<keyword id="KW-0687">Ribonucleoprotein</keyword>
<keyword id="KW-0689">Ribosomal protein</keyword>
<gene>
    <name evidence="1" type="primary">rpsI</name>
    <name evidence="1" type="synonym">rps9</name>
    <name type="ordered locus">SpyM3_1663</name>
</gene>
<dbReference type="EMBL" id="AE014074">
    <property type="protein sequence ID" value="AAM80270.1"/>
    <property type="molecule type" value="Genomic_DNA"/>
</dbReference>
<dbReference type="RefSeq" id="WP_002982716.1">
    <property type="nucleotide sequence ID" value="NC_004070.1"/>
</dbReference>
<dbReference type="SMR" id="P0DF02"/>
<dbReference type="GeneID" id="83689365"/>
<dbReference type="KEGG" id="spg:SpyM3_1663"/>
<dbReference type="HOGENOM" id="CLU_046483_2_1_9"/>
<dbReference type="Proteomes" id="UP000000564">
    <property type="component" value="Chromosome"/>
</dbReference>
<dbReference type="GO" id="GO:0022627">
    <property type="term" value="C:cytosolic small ribosomal subunit"/>
    <property type="evidence" value="ECO:0007669"/>
    <property type="project" value="TreeGrafter"/>
</dbReference>
<dbReference type="GO" id="GO:0003723">
    <property type="term" value="F:RNA binding"/>
    <property type="evidence" value="ECO:0007669"/>
    <property type="project" value="TreeGrafter"/>
</dbReference>
<dbReference type="GO" id="GO:0003735">
    <property type="term" value="F:structural constituent of ribosome"/>
    <property type="evidence" value="ECO:0007669"/>
    <property type="project" value="InterPro"/>
</dbReference>
<dbReference type="GO" id="GO:0006412">
    <property type="term" value="P:translation"/>
    <property type="evidence" value="ECO:0007669"/>
    <property type="project" value="UniProtKB-UniRule"/>
</dbReference>
<dbReference type="FunFam" id="3.30.230.10:FF:000001">
    <property type="entry name" value="30S ribosomal protein S9"/>
    <property type="match status" value="1"/>
</dbReference>
<dbReference type="Gene3D" id="3.30.230.10">
    <property type="match status" value="1"/>
</dbReference>
<dbReference type="HAMAP" id="MF_00532_B">
    <property type="entry name" value="Ribosomal_uS9_B"/>
    <property type="match status" value="1"/>
</dbReference>
<dbReference type="InterPro" id="IPR020568">
    <property type="entry name" value="Ribosomal_Su5_D2-typ_SF"/>
</dbReference>
<dbReference type="InterPro" id="IPR000754">
    <property type="entry name" value="Ribosomal_uS9"/>
</dbReference>
<dbReference type="InterPro" id="IPR023035">
    <property type="entry name" value="Ribosomal_uS9_bac/plastid"/>
</dbReference>
<dbReference type="InterPro" id="IPR020574">
    <property type="entry name" value="Ribosomal_uS9_CS"/>
</dbReference>
<dbReference type="InterPro" id="IPR014721">
    <property type="entry name" value="Ribsml_uS5_D2-typ_fold_subgr"/>
</dbReference>
<dbReference type="NCBIfam" id="NF001099">
    <property type="entry name" value="PRK00132.1"/>
    <property type="match status" value="1"/>
</dbReference>
<dbReference type="PANTHER" id="PTHR21569">
    <property type="entry name" value="RIBOSOMAL PROTEIN S9"/>
    <property type="match status" value="1"/>
</dbReference>
<dbReference type="PANTHER" id="PTHR21569:SF1">
    <property type="entry name" value="SMALL RIBOSOMAL SUBUNIT PROTEIN US9M"/>
    <property type="match status" value="1"/>
</dbReference>
<dbReference type="Pfam" id="PF00380">
    <property type="entry name" value="Ribosomal_S9"/>
    <property type="match status" value="1"/>
</dbReference>
<dbReference type="SUPFAM" id="SSF54211">
    <property type="entry name" value="Ribosomal protein S5 domain 2-like"/>
    <property type="match status" value="1"/>
</dbReference>
<dbReference type="PROSITE" id="PS00360">
    <property type="entry name" value="RIBOSOMAL_S9"/>
    <property type="match status" value="1"/>
</dbReference>
<name>RS9_STRP3</name>
<feature type="chain" id="PRO_0000111423" description="Small ribosomal subunit protein uS9">
    <location>
        <begin position="1"/>
        <end position="130"/>
    </location>
</feature>
<accession>P0DF02</accession>
<accession>P66649</accession>
<accession>Q99Y08</accession>
<proteinExistence type="inferred from homology"/>
<comment type="similarity">
    <text evidence="1">Belongs to the universal ribosomal protein uS9 family.</text>
</comment>
<evidence type="ECO:0000255" key="1">
    <source>
        <dbReference type="HAMAP-Rule" id="MF_00532"/>
    </source>
</evidence>
<evidence type="ECO:0000305" key="2"/>
<reference key="1">
    <citation type="journal article" date="2002" name="Proc. Natl. Acad. Sci. U.S.A.">
        <title>Genome sequence of a serotype M3 strain of group A Streptococcus: phage-encoded toxins, the high-virulence phenotype, and clone emergence.</title>
        <authorList>
            <person name="Beres S.B."/>
            <person name="Sylva G.L."/>
            <person name="Barbian K.D."/>
            <person name="Lei B."/>
            <person name="Hoff J.S."/>
            <person name="Mammarella N.D."/>
            <person name="Liu M.-Y."/>
            <person name="Smoot J.C."/>
            <person name="Porcella S.F."/>
            <person name="Parkins L.D."/>
            <person name="Campbell D.S."/>
            <person name="Smith T.M."/>
            <person name="McCormick J.K."/>
            <person name="Leung D.Y.M."/>
            <person name="Schlievert P.M."/>
            <person name="Musser J.M."/>
        </authorList>
    </citation>
    <scope>NUCLEOTIDE SEQUENCE [LARGE SCALE GENOMIC DNA]</scope>
    <source>
        <strain>ATCC BAA-595 / MGAS315</strain>
    </source>
</reference>